<organism>
    <name type="scientific">Rickettsia massiliae (strain Mtu5)</name>
    <dbReference type="NCBI Taxonomy" id="416276"/>
    <lineage>
        <taxon>Bacteria</taxon>
        <taxon>Pseudomonadati</taxon>
        <taxon>Pseudomonadota</taxon>
        <taxon>Alphaproteobacteria</taxon>
        <taxon>Rickettsiales</taxon>
        <taxon>Rickettsiaceae</taxon>
        <taxon>Rickettsieae</taxon>
        <taxon>Rickettsia</taxon>
        <taxon>spotted fever group</taxon>
    </lineage>
</organism>
<evidence type="ECO:0000255" key="1">
    <source>
        <dbReference type="HAMAP-Rule" id="MF_00671"/>
    </source>
</evidence>
<feature type="signal peptide" evidence="1">
    <location>
        <begin position="1"/>
        <end position="19"/>
    </location>
</feature>
<feature type="chain" id="PRO_1000061938" description="Tol-Pal system protein TolB" evidence="1">
    <location>
        <begin position="20"/>
        <end position="444"/>
    </location>
</feature>
<proteinExistence type="inferred from homology"/>
<dbReference type="EMBL" id="CP000683">
    <property type="protein sequence ID" value="ABV84654.1"/>
    <property type="molecule type" value="Genomic_DNA"/>
</dbReference>
<dbReference type="RefSeq" id="WP_012152631.1">
    <property type="nucleotide sequence ID" value="NC_009900.1"/>
</dbReference>
<dbReference type="SMR" id="A8F168"/>
<dbReference type="KEGG" id="rms:RMA_0416"/>
<dbReference type="HOGENOM" id="CLU_047123_0_0_5"/>
<dbReference type="Proteomes" id="UP000001311">
    <property type="component" value="Chromosome"/>
</dbReference>
<dbReference type="GO" id="GO:0042597">
    <property type="term" value="C:periplasmic space"/>
    <property type="evidence" value="ECO:0007669"/>
    <property type="project" value="UniProtKB-SubCell"/>
</dbReference>
<dbReference type="GO" id="GO:0051301">
    <property type="term" value="P:cell division"/>
    <property type="evidence" value="ECO:0007669"/>
    <property type="project" value="UniProtKB-UniRule"/>
</dbReference>
<dbReference type="GO" id="GO:0017038">
    <property type="term" value="P:protein import"/>
    <property type="evidence" value="ECO:0007669"/>
    <property type="project" value="InterPro"/>
</dbReference>
<dbReference type="Gene3D" id="2.120.10.30">
    <property type="entry name" value="TolB, C-terminal domain"/>
    <property type="match status" value="1"/>
</dbReference>
<dbReference type="Gene3D" id="3.40.50.10070">
    <property type="entry name" value="TolB, N-terminal domain"/>
    <property type="match status" value="1"/>
</dbReference>
<dbReference type="HAMAP" id="MF_00671">
    <property type="entry name" value="TolB"/>
    <property type="match status" value="1"/>
</dbReference>
<dbReference type="InterPro" id="IPR011042">
    <property type="entry name" value="6-blade_b-propeller_TolB-like"/>
</dbReference>
<dbReference type="InterPro" id="IPR011659">
    <property type="entry name" value="PD40"/>
</dbReference>
<dbReference type="InterPro" id="IPR014167">
    <property type="entry name" value="Tol-Pal_TolB"/>
</dbReference>
<dbReference type="InterPro" id="IPR007195">
    <property type="entry name" value="TolB_N"/>
</dbReference>
<dbReference type="NCBIfam" id="TIGR02800">
    <property type="entry name" value="propeller_TolB"/>
    <property type="match status" value="1"/>
</dbReference>
<dbReference type="PANTHER" id="PTHR36842:SF1">
    <property type="entry name" value="PROTEIN TOLB"/>
    <property type="match status" value="1"/>
</dbReference>
<dbReference type="PANTHER" id="PTHR36842">
    <property type="entry name" value="PROTEIN TOLB HOMOLOG"/>
    <property type="match status" value="1"/>
</dbReference>
<dbReference type="Pfam" id="PF07676">
    <property type="entry name" value="PD40"/>
    <property type="match status" value="4"/>
</dbReference>
<dbReference type="Pfam" id="PF04052">
    <property type="entry name" value="TolB_N"/>
    <property type="match status" value="1"/>
</dbReference>
<dbReference type="SUPFAM" id="SSF52964">
    <property type="entry name" value="TolB, N-terminal domain"/>
    <property type="match status" value="1"/>
</dbReference>
<dbReference type="SUPFAM" id="SSF69304">
    <property type="entry name" value="Tricorn protease N-terminal domain"/>
    <property type="match status" value="1"/>
</dbReference>
<comment type="function">
    <text evidence="1">Part of the Tol-Pal system, which plays a role in outer membrane invagination during cell division and is important for maintaining outer membrane integrity.</text>
</comment>
<comment type="subunit">
    <text evidence="1">The Tol-Pal system is composed of five core proteins: the inner membrane proteins TolA, TolQ and TolR, the periplasmic protein TolB and the outer membrane protein Pal. They form a network linking the inner and outer membranes and the peptidoglycan layer.</text>
</comment>
<comment type="subcellular location">
    <subcellularLocation>
        <location evidence="1">Periplasm</location>
    </subcellularLocation>
</comment>
<comment type="similarity">
    <text evidence="1">Belongs to the TolB family.</text>
</comment>
<gene>
    <name evidence="1" type="primary">tolB</name>
    <name type="ordered locus">RMA_0416</name>
</gene>
<sequence>MRNIIYFILSLLFSFASYALETINIEHGRADPTPIAVNKFNADNSAADVLGHDMVKVISNDLKLSGLFRPISAASFIEEKTGIEYKPLFAAWRQINASLLVNGEVKKLESGKFKISFILWDTLLEKQLAGEILEVPENLWRRAAHKIADKIYEKITGDAGYFDTKIVYVSESNSLPKIKRIALMDYDGANNKYLTNGKSLVLTPRFARSADKIFYVSYATKRRALVYEKDLKTGKESVVGDFPGISFAPRFSPDGRKAVMSIAQNGSTHIYEIDLATKRLHKLTDGFGINTSPSYSPDGKKIVYNSDRNGVPQLYIMNSDGSDVQRISFGGGSYAAPSWSPRGDYIAFTKITRGDGGKTFNIGIMKACPQDDENSERIITSGYLVESPCWSPNGRVIMFTKGWPSRAKAPGKNKIFAIDLTGHNEREIMTPADASDPEWSGVLN</sequence>
<name>TOLB_RICM5</name>
<reference key="1">
    <citation type="journal article" date="2007" name="Genome Res.">
        <title>Lateral gene transfer between obligate intracellular bacteria: evidence from the Rickettsia massiliae genome.</title>
        <authorList>
            <person name="Blanc G."/>
            <person name="Ogata H."/>
            <person name="Robert C."/>
            <person name="Audic S."/>
            <person name="Claverie J.-M."/>
            <person name="Raoult D."/>
        </authorList>
    </citation>
    <scope>NUCLEOTIDE SEQUENCE [LARGE SCALE GENOMIC DNA]</scope>
    <source>
        <strain>Mtu5</strain>
    </source>
</reference>
<accession>A8F168</accession>
<protein>
    <recommendedName>
        <fullName evidence="1">Tol-Pal system protein TolB</fullName>
    </recommendedName>
</protein>
<keyword id="KW-0131">Cell cycle</keyword>
<keyword id="KW-0132">Cell division</keyword>
<keyword id="KW-0574">Periplasm</keyword>
<keyword id="KW-0732">Signal</keyword>